<reference key="1">
    <citation type="journal article" date="2004" name="Nucleic Acids Res.">
        <title>Genome sequence of Symbiobacterium thermophilum, an uncultivable bacterium that depends on microbial commensalism.</title>
        <authorList>
            <person name="Ueda K."/>
            <person name="Yamashita A."/>
            <person name="Ishikawa J."/>
            <person name="Shimada M."/>
            <person name="Watsuji T."/>
            <person name="Morimura K."/>
            <person name="Ikeda H."/>
            <person name="Hattori M."/>
            <person name="Beppu T."/>
        </authorList>
    </citation>
    <scope>NUCLEOTIDE SEQUENCE [LARGE SCALE GENOMIC DNA]</scope>
    <source>
        <strain>DSM 24528 / JCM 14929 / IAM 14863 / T</strain>
    </source>
</reference>
<accession>Q67JU6</accession>
<name>RL2_SYMTH</name>
<keyword id="KW-1185">Reference proteome</keyword>
<keyword id="KW-0687">Ribonucleoprotein</keyword>
<keyword id="KW-0689">Ribosomal protein</keyword>
<keyword id="KW-0694">RNA-binding</keyword>
<keyword id="KW-0699">rRNA-binding</keyword>
<protein>
    <recommendedName>
        <fullName evidence="1">Large ribosomal subunit protein uL2</fullName>
    </recommendedName>
    <alternativeName>
        <fullName evidence="3">50S ribosomal protein L2</fullName>
    </alternativeName>
</protein>
<comment type="function">
    <text evidence="1">One of the primary rRNA binding proteins. Required for association of the 30S and 50S subunits to form the 70S ribosome, for tRNA binding and peptide bond formation. It has been suggested to have peptidyltransferase activity; this is somewhat controversial. Makes several contacts with the 16S rRNA in the 70S ribosome.</text>
</comment>
<comment type="subunit">
    <text evidence="1">Part of the 50S ribosomal subunit. Forms a bridge to the 30S subunit in the 70S ribosome.</text>
</comment>
<comment type="similarity">
    <text evidence="1">Belongs to the universal ribosomal protein uL2 family.</text>
</comment>
<gene>
    <name evidence="1" type="primary">rplB</name>
    <name type="ordered locus">STH3072</name>
</gene>
<proteinExistence type="inferred from homology"/>
<dbReference type="EMBL" id="AP006840">
    <property type="protein sequence ID" value="BAD42054.1"/>
    <property type="molecule type" value="Genomic_DNA"/>
</dbReference>
<dbReference type="RefSeq" id="WP_011197187.1">
    <property type="nucleotide sequence ID" value="NC_006177.1"/>
</dbReference>
<dbReference type="SMR" id="Q67JU6"/>
<dbReference type="STRING" id="292459.STH3072"/>
<dbReference type="KEGG" id="sth:STH3072"/>
<dbReference type="eggNOG" id="COG0090">
    <property type="taxonomic scope" value="Bacteria"/>
</dbReference>
<dbReference type="HOGENOM" id="CLU_036235_2_1_9"/>
<dbReference type="OrthoDB" id="9778722at2"/>
<dbReference type="Proteomes" id="UP000000417">
    <property type="component" value="Chromosome"/>
</dbReference>
<dbReference type="GO" id="GO:0015934">
    <property type="term" value="C:large ribosomal subunit"/>
    <property type="evidence" value="ECO:0007669"/>
    <property type="project" value="InterPro"/>
</dbReference>
<dbReference type="GO" id="GO:0019843">
    <property type="term" value="F:rRNA binding"/>
    <property type="evidence" value="ECO:0007669"/>
    <property type="project" value="UniProtKB-UniRule"/>
</dbReference>
<dbReference type="GO" id="GO:0003735">
    <property type="term" value="F:structural constituent of ribosome"/>
    <property type="evidence" value="ECO:0007669"/>
    <property type="project" value="InterPro"/>
</dbReference>
<dbReference type="GO" id="GO:0016740">
    <property type="term" value="F:transferase activity"/>
    <property type="evidence" value="ECO:0007669"/>
    <property type="project" value="InterPro"/>
</dbReference>
<dbReference type="GO" id="GO:0002181">
    <property type="term" value="P:cytoplasmic translation"/>
    <property type="evidence" value="ECO:0007669"/>
    <property type="project" value="TreeGrafter"/>
</dbReference>
<dbReference type="FunFam" id="2.30.30.30:FF:000001">
    <property type="entry name" value="50S ribosomal protein L2"/>
    <property type="match status" value="1"/>
</dbReference>
<dbReference type="FunFam" id="2.40.50.140:FF:000003">
    <property type="entry name" value="50S ribosomal protein L2"/>
    <property type="match status" value="1"/>
</dbReference>
<dbReference type="FunFam" id="4.10.950.10:FF:000001">
    <property type="entry name" value="50S ribosomal protein L2"/>
    <property type="match status" value="1"/>
</dbReference>
<dbReference type="Gene3D" id="2.30.30.30">
    <property type="match status" value="1"/>
</dbReference>
<dbReference type="Gene3D" id="2.40.50.140">
    <property type="entry name" value="Nucleic acid-binding proteins"/>
    <property type="match status" value="1"/>
</dbReference>
<dbReference type="Gene3D" id="4.10.950.10">
    <property type="entry name" value="Ribosomal protein L2, domain 3"/>
    <property type="match status" value="1"/>
</dbReference>
<dbReference type="HAMAP" id="MF_01320_B">
    <property type="entry name" value="Ribosomal_uL2_B"/>
    <property type="match status" value="1"/>
</dbReference>
<dbReference type="InterPro" id="IPR012340">
    <property type="entry name" value="NA-bd_OB-fold"/>
</dbReference>
<dbReference type="InterPro" id="IPR014722">
    <property type="entry name" value="Rib_uL2_dom2"/>
</dbReference>
<dbReference type="InterPro" id="IPR002171">
    <property type="entry name" value="Ribosomal_uL2"/>
</dbReference>
<dbReference type="InterPro" id="IPR005880">
    <property type="entry name" value="Ribosomal_uL2_bac/org-type"/>
</dbReference>
<dbReference type="InterPro" id="IPR022669">
    <property type="entry name" value="Ribosomal_uL2_C"/>
</dbReference>
<dbReference type="InterPro" id="IPR022671">
    <property type="entry name" value="Ribosomal_uL2_CS"/>
</dbReference>
<dbReference type="InterPro" id="IPR014726">
    <property type="entry name" value="Ribosomal_uL2_dom3"/>
</dbReference>
<dbReference type="InterPro" id="IPR022666">
    <property type="entry name" value="Ribosomal_uL2_RNA-bd_dom"/>
</dbReference>
<dbReference type="InterPro" id="IPR008991">
    <property type="entry name" value="Translation_prot_SH3-like_sf"/>
</dbReference>
<dbReference type="NCBIfam" id="TIGR01171">
    <property type="entry name" value="rplB_bact"/>
    <property type="match status" value="1"/>
</dbReference>
<dbReference type="PANTHER" id="PTHR13691:SF5">
    <property type="entry name" value="LARGE RIBOSOMAL SUBUNIT PROTEIN UL2M"/>
    <property type="match status" value="1"/>
</dbReference>
<dbReference type="PANTHER" id="PTHR13691">
    <property type="entry name" value="RIBOSOMAL PROTEIN L2"/>
    <property type="match status" value="1"/>
</dbReference>
<dbReference type="Pfam" id="PF00181">
    <property type="entry name" value="Ribosomal_L2"/>
    <property type="match status" value="1"/>
</dbReference>
<dbReference type="Pfam" id="PF03947">
    <property type="entry name" value="Ribosomal_L2_C"/>
    <property type="match status" value="1"/>
</dbReference>
<dbReference type="PIRSF" id="PIRSF002158">
    <property type="entry name" value="Ribosomal_L2"/>
    <property type="match status" value="1"/>
</dbReference>
<dbReference type="SMART" id="SM01383">
    <property type="entry name" value="Ribosomal_L2"/>
    <property type="match status" value="1"/>
</dbReference>
<dbReference type="SMART" id="SM01382">
    <property type="entry name" value="Ribosomal_L2_C"/>
    <property type="match status" value="1"/>
</dbReference>
<dbReference type="SUPFAM" id="SSF50249">
    <property type="entry name" value="Nucleic acid-binding proteins"/>
    <property type="match status" value="1"/>
</dbReference>
<dbReference type="SUPFAM" id="SSF50104">
    <property type="entry name" value="Translation proteins SH3-like domain"/>
    <property type="match status" value="1"/>
</dbReference>
<dbReference type="PROSITE" id="PS00467">
    <property type="entry name" value="RIBOSOMAL_L2"/>
    <property type="match status" value="1"/>
</dbReference>
<evidence type="ECO:0000255" key="1">
    <source>
        <dbReference type="HAMAP-Rule" id="MF_01320"/>
    </source>
</evidence>
<evidence type="ECO:0000256" key="2">
    <source>
        <dbReference type="SAM" id="MobiDB-lite"/>
    </source>
</evidence>
<evidence type="ECO:0000305" key="3"/>
<organism>
    <name type="scientific">Symbiobacterium thermophilum (strain DSM 24528 / JCM 14929 / IAM 14863 / T)</name>
    <dbReference type="NCBI Taxonomy" id="292459"/>
    <lineage>
        <taxon>Bacteria</taxon>
        <taxon>Bacillati</taxon>
        <taxon>Bacillota</taxon>
        <taxon>Clostridia</taxon>
        <taxon>Eubacteriales</taxon>
        <taxon>Symbiobacteriaceae</taxon>
        <taxon>Symbiobacterium</taxon>
    </lineage>
</organism>
<feature type="chain" id="PRO_0000237251" description="Large ribosomal subunit protein uL2">
    <location>
        <begin position="1"/>
        <end position="277"/>
    </location>
</feature>
<feature type="region of interest" description="Disordered" evidence="2">
    <location>
        <begin position="226"/>
        <end position="277"/>
    </location>
</feature>
<sequence length="277" mass="30602">MGIKHYKPTSPGIRQMTRHTFEELTSTRPEKSLLERLTRKAGRNVYGRITVRHRGGGHKRMYRIIDFKRNEFDGIPAKVVSIEYDPNRTCRIAKVVYANGAKRYILHPVGLNVGDTVVSGPDADIKVGNALPLENIPVGTIVHNIELYPGRGGQLVRSAGASAQIMAKEGRYALLRLPSGEQRKVLLACRATVGQVGNLEHENIVIGKAGRKRHLGFRPAVRGVVMNPVDHPHGGGEGRSPIGMPSPVTPWGKPTLGYKTRKPNKKSDRLIVSRRKK</sequence>